<protein>
    <recommendedName>
        <fullName evidence="3">Conotoxin Cal30</fullName>
    </recommendedName>
    <alternativeName>
        <fullName evidence="2">O2_cal30</fullName>
    </alternativeName>
</protein>
<name>C30_CONCL</name>
<feature type="signal peptide" evidence="1">
    <location>
        <begin position="1"/>
        <end position="19"/>
    </location>
</feature>
<feature type="chain" id="PRO_0000450960" description="Conotoxin Cal30" evidence="3">
    <location>
        <begin position="20"/>
        <end position="82"/>
    </location>
</feature>
<accession>P0DTX8</accession>
<evidence type="ECO:0000255" key="1"/>
<evidence type="ECO:0000303" key="2">
    <source>
    </source>
</evidence>
<evidence type="ECO:0000305" key="3"/>
<evidence type="ECO:0000305" key="4">
    <source>
    </source>
</evidence>
<keyword id="KW-1015">Disulfide bond</keyword>
<keyword id="KW-0528">Neurotoxin</keyword>
<keyword id="KW-0964">Secreted</keyword>
<keyword id="KW-0732">Signal</keyword>
<keyword id="KW-0800">Toxin</keyword>
<comment type="function">
    <text evidence="3">Probable neurotoxin.</text>
</comment>
<comment type="subcellular location">
    <subcellularLocation>
        <location evidence="4">Secreted</location>
    </subcellularLocation>
</comment>
<comment type="tissue specificity">
    <text evidence="4">Expressed by the venom duct.</text>
</comment>
<comment type="domain">
    <text evidence="3">The cysteine framework is XXX (C-C-CCC-C-C-C-CC).</text>
</comment>
<comment type="PTM">
    <text evidence="3">May contain 5 disulfide bonds.</text>
</comment>
<sequence length="82" mass="8914">MEKLIILLLVASLLVTTDSVVKGKKAARGWLFNEVETCELGGLGDPCSGSGDCCCDQCLCSGSYEHCTQNPDRWFCCRTYGN</sequence>
<proteinExistence type="inferred from homology"/>
<reference key="1">
    <citation type="journal article" date="2019" name="Toxins">
        <title>The diversified O-superfamily in Californiconus californicus presents a conotoxin with antimycobacterial activity.</title>
        <authorList>
            <person name="Bernaldez-Sarabia J."/>
            <person name="Figueroa-Montiel A."/>
            <person name="Duenas S."/>
            <person name="Cervantes-Luevano K."/>
            <person name="Beltran J.A."/>
            <person name="Ortiz E."/>
            <person name="Jimenez S."/>
            <person name="Possani L.D."/>
            <person name="Paniagua-Solis J.F."/>
            <person name="Gonzalez-Canudas J."/>
            <person name="Licea-Navarro A."/>
        </authorList>
    </citation>
    <scope>NUCLEOTIDE SEQUENCE [MRNA]</scope>
    <source>
        <tissue>Venom duct</tissue>
    </source>
</reference>
<organism>
    <name type="scientific">Californiconus californicus</name>
    <name type="common">California cone</name>
    <name type="synonym">Conus californicus</name>
    <dbReference type="NCBI Taxonomy" id="1736779"/>
    <lineage>
        <taxon>Eukaryota</taxon>
        <taxon>Metazoa</taxon>
        <taxon>Spiralia</taxon>
        <taxon>Lophotrochozoa</taxon>
        <taxon>Mollusca</taxon>
        <taxon>Gastropoda</taxon>
        <taxon>Caenogastropoda</taxon>
        <taxon>Neogastropoda</taxon>
        <taxon>Conoidea</taxon>
        <taxon>Conidae</taxon>
        <taxon>Californiconus</taxon>
    </lineage>
</organism>
<dbReference type="SMR" id="P0DTX8"/>
<dbReference type="GO" id="GO:0005576">
    <property type="term" value="C:extracellular region"/>
    <property type="evidence" value="ECO:0007669"/>
    <property type="project" value="UniProtKB-SubCell"/>
</dbReference>
<dbReference type="GO" id="GO:0090729">
    <property type="term" value="F:toxin activity"/>
    <property type="evidence" value="ECO:0007669"/>
    <property type="project" value="UniProtKB-KW"/>
</dbReference>